<feature type="chain" id="PRO_0000073864" description="N-terminal EF-hand calcium-binding protein 3">
    <location>
        <begin position="1"/>
        <end position="353"/>
    </location>
</feature>
<feature type="domain" description="EF-hand" evidence="2">
    <location>
        <begin position="27"/>
        <end position="62"/>
    </location>
</feature>
<feature type="domain" description="ABM">
    <location>
        <begin position="253"/>
        <end position="342"/>
    </location>
</feature>
<feature type="region of interest" description="Required for interaction with APBA3" evidence="1">
    <location>
        <begin position="172"/>
        <end position="181"/>
    </location>
</feature>
<feature type="region of interest" description="Disordered" evidence="3">
    <location>
        <begin position="193"/>
        <end position="213"/>
    </location>
</feature>
<feature type="compositionally biased region" description="Low complexity" evidence="3">
    <location>
        <begin position="193"/>
        <end position="203"/>
    </location>
</feature>
<feature type="compositionally biased region" description="Polar residues" evidence="3">
    <location>
        <begin position="204"/>
        <end position="213"/>
    </location>
</feature>
<feature type="binding site" evidence="2">
    <location>
        <position position="40"/>
    </location>
    <ligand>
        <name>Ca(2+)</name>
        <dbReference type="ChEBI" id="CHEBI:29108"/>
    </ligand>
</feature>
<feature type="binding site" evidence="2">
    <location>
        <position position="42"/>
    </location>
    <ligand>
        <name>Ca(2+)</name>
        <dbReference type="ChEBI" id="CHEBI:29108"/>
    </ligand>
</feature>
<feature type="binding site" evidence="2">
    <location>
        <position position="44"/>
    </location>
    <ligand>
        <name>Ca(2+)</name>
        <dbReference type="ChEBI" id="CHEBI:29108"/>
    </ligand>
</feature>
<feature type="binding site" evidence="2">
    <location>
        <position position="46"/>
    </location>
    <ligand>
        <name>Ca(2+)</name>
        <dbReference type="ChEBI" id="CHEBI:29108"/>
    </ligand>
</feature>
<feature type="binding site" evidence="2">
    <location>
        <position position="51"/>
    </location>
    <ligand>
        <name>Ca(2+)</name>
        <dbReference type="ChEBI" id="CHEBI:29108"/>
    </ligand>
</feature>
<feature type="splice variant" id="VSP_000740" description="In isoform 2." evidence="5">
    <location>
        <begin position="233"/>
        <end position="256"/>
    </location>
</feature>
<feature type="sequence conflict" description="In Ref. 5; AAI26875." evidence="6" ref="5">
    <original>R</original>
    <variation>W</variation>
    <location>
        <position position="166"/>
    </location>
</feature>
<feature type="sequence conflict" description="In Ref. 1; BAB28895." evidence="6" ref="1">
    <original>F</original>
    <variation>C</variation>
    <location>
        <position position="305"/>
    </location>
</feature>
<accession>Q9D6J4</accession>
<accession>A1L0S0</accession>
<accession>A1L0S1</accession>
<accession>A2AKE8</accession>
<accession>A2AKE9</accession>
<accession>Q3TYZ9</accession>
<accession>Q9ESR0</accession>
<dbReference type="EMBL" id="AK013520">
    <property type="protein sequence ID" value="BAB28895.1"/>
    <property type="molecule type" value="mRNA"/>
</dbReference>
<dbReference type="EMBL" id="AK044296">
    <property type="protein sequence ID" value="BAC31859.1"/>
    <property type="molecule type" value="mRNA"/>
</dbReference>
<dbReference type="EMBL" id="AK158225">
    <property type="protein sequence ID" value="BAE34411.1"/>
    <property type="molecule type" value="mRNA"/>
</dbReference>
<dbReference type="EMBL" id="AL772292">
    <property type="status" value="NOT_ANNOTATED_CDS"/>
    <property type="molecule type" value="Genomic_DNA"/>
</dbReference>
<dbReference type="EMBL" id="CH466551">
    <property type="protein sequence ID" value="EDL06077.1"/>
    <property type="molecule type" value="Genomic_DNA"/>
</dbReference>
<dbReference type="EMBL" id="CH466551">
    <property type="protein sequence ID" value="EDL06081.1"/>
    <property type="molecule type" value="Genomic_DNA"/>
</dbReference>
<dbReference type="EMBL" id="AB039948">
    <property type="protein sequence ID" value="BAB16414.1"/>
    <property type="status" value="ALT_INIT"/>
    <property type="molecule type" value="mRNA"/>
</dbReference>
<dbReference type="EMBL" id="BC126874">
    <property type="protein sequence ID" value="AAI26875.1"/>
    <property type="status" value="ALT_INIT"/>
    <property type="molecule type" value="mRNA"/>
</dbReference>
<dbReference type="EMBL" id="BC126875">
    <property type="protein sequence ID" value="AAI26876.1"/>
    <property type="status" value="ALT_INIT"/>
    <property type="molecule type" value="mRNA"/>
</dbReference>
<dbReference type="CCDS" id="CCDS50766.1">
    <molecule id="Q9D6J4-1"/>
</dbReference>
<dbReference type="RefSeq" id="NP_001366076.1">
    <molecule id="Q9D6J4-2"/>
    <property type="nucleotide sequence ID" value="NM_001379147.1"/>
</dbReference>
<dbReference type="RefSeq" id="NP_067521.2">
    <molecule id="Q9D6J4-1"/>
    <property type="nucleotide sequence ID" value="NM_021546.3"/>
</dbReference>
<dbReference type="FunCoup" id="Q9D6J4">
    <property type="interactions" value="689"/>
</dbReference>
<dbReference type="STRING" id="10090.ENSMUSP00000000895"/>
<dbReference type="PhosphoSitePlus" id="Q9D6J4"/>
<dbReference type="PaxDb" id="10090-ENSMUSP00000000895"/>
<dbReference type="ProteomicsDB" id="252875">
    <molecule id="Q9D6J4-1"/>
</dbReference>
<dbReference type="ProteomicsDB" id="252876">
    <molecule id="Q9D6J4-2"/>
</dbReference>
<dbReference type="Antibodypedia" id="25664">
    <property type="antibodies" value="137 antibodies from 27 providers"/>
</dbReference>
<dbReference type="DNASU" id="56846"/>
<dbReference type="Ensembl" id="ENSMUST00000000895.13">
    <molecule id="Q9D6J4-1"/>
    <property type="protein sequence ID" value="ENSMUSP00000000895.7"/>
    <property type="gene ID" value="ENSMUSG00000027489.16"/>
</dbReference>
<dbReference type="Ensembl" id="ENSMUST00000109716.9">
    <molecule id="Q9D6J4-2"/>
    <property type="protein sequence ID" value="ENSMUSP00000105338.3"/>
    <property type="gene ID" value="ENSMUSG00000027489.16"/>
</dbReference>
<dbReference type="GeneID" id="56846"/>
<dbReference type="KEGG" id="mmu:56846"/>
<dbReference type="UCSC" id="uc008njh.1">
    <molecule id="Q9D6J4-1"/>
    <property type="organism name" value="mouse"/>
</dbReference>
<dbReference type="UCSC" id="uc008nji.1">
    <molecule id="Q9D6J4-2"/>
    <property type="organism name" value="mouse"/>
</dbReference>
<dbReference type="AGR" id="MGI:1861721"/>
<dbReference type="CTD" id="63941"/>
<dbReference type="MGI" id="MGI:1861721">
    <property type="gene designation" value="Necab3"/>
</dbReference>
<dbReference type="VEuPathDB" id="HostDB:ENSMUSG00000027489"/>
<dbReference type="eggNOG" id="ENOG502QWRY">
    <property type="taxonomic scope" value="Eukaryota"/>
</dbReference>
<dbReference type="GeneTree" id="ENSGT00950000183131"/>
<dbReference type="HOGENOM" id="CLU_041553_3_0_1"/>
<dbReference type="InParanoid" id="Q9D6J4"/>
<dbReference type="OMA" id="RNNMNKS"/>
<dbReference type="OrthoDB" id="289247at2759"/>
<dbReference type="PhylomeDB" id="Q9D6J4"/>
<dbReference type="TreeFam" id="TF331029"/>
<dbReference type="BioGRID-ORCS" id="56846">
    <property type="hits" value="4 hits in 76 CRISPR screens"/>
</dbReference>
<dbReference type="PRO" id="PR:Q9D6J4"/>
<dbReference type="Proteomes" id="UP000000589">
    <property type="component" value="Chromosome 2"/>
</dbReference>
<dbReference type="RNAct" id="Q9D6J4">
    <property type="molecule type" value="protein"/>
</dbReference>
<dbReference type="Bgee" id="ENSMUSG00000027489">
    <property type="expression patterns" value="Expressed in habenula and 97 other cell types or tissues"/>
</dbReference>
<dbReference type="ExpressionAtlas" id="Q9D6J4">
    <property type="expression patterns" value="baseline and differential"/>
</dbReference>
<dbReference type="GO" id="GO:0005737">
    <property type="term" value="C:cytoplasm"/>
    <property type="evidence" value="ECO:0000250"/>
    <property type="project" value="UniProtKB"/>
</dbReference>
<dbReference type="GO" id="GO:0005783">
    <property type="term" value="C:endoplasmic reticulum"/>
    <property type="evidence" value="ECO:0000314"/>
    <property type="project" value="MGI"/>
</dbReference>
<dbReference type="GO" id="GO:0005789">
    <property type="term" value="C:endoplasmic reticulum membrane"/>
    <property type="evidence" value="ECO:0000250"/>
    <property type="project" value="UniProtKB"/>
</dbReference>
<dbReference type="GO" id="GO:0000137">
    <property type="term" value="C:Golgi cis cisterna"/>
    <property type="evidence" value="ECO:0000314"/>
    <property type="project" value="MGI"/>
</dbReference>
<dbReference type="GO" id="GO:0005509">
    <property type="term" value="F:calcium ion binding"/>
    <property type="evidence" value="ECO:0007669"/>
    <property type="project" value="InterPro"/>
</dbReference>
<dbReference type="GO" id="GO:0019538">
    <property type="term" value="P:protein metabolic process"/>
    <property type="evidence" value="ECO:0000250"/>
    <property type="project" value="UniProtKB"/>
</dbReference>
<dbReference type="GO" id="GO:0042984">
    <property type="term" value="P:regulation of amyloid precursor protein biosynthetic process"/>
    <property type="evidence" value="ECO:0007669"/>
    <property type="project" value="Ensembl"/>
</dbReference>
<dbReference type="FunFam" id="1.10.238.10:FF:000670">
    <property type="entry name" value="N-terminal EF-hand calcium binding protein 3"/>
    <property type="match status" value="1"/>
</dbReference>
<dbReference type="FunFam" id="3.30.70.100:FF:000023">
    <property type="entry name" value="N-terminal EF-hand calcium binding protein 3"/>
    <property type="match status" value="1"/>
</dbReference>
<dbReference type="Gene3D" id="3.30.70.100">
    <property type="match status" value="1"/>
</dbReference>
<dbReference type="Gene3D" id="1.10.238.10">
    <property type="entry name" value="EF-hand"/>
    <property type="match status" value="1"/>
</dbReference>
<dbReference type="InterPro" id="IPR007138">
    <property type="entry name" value="ABM_dom"/>
</dbReference>
<dbReference type="InterPro" id="IPR011008">
    <property type="entry name" value="Dimeric_a/b-barrel"/>
</dbReference>
<dbReference type="InterPro" id="IPR011992">
    <property type="entry name" value="EF-hand-dom_pair"/>
</dbReference>
<dbReference type="InterPro" id="IPR018247">
    <property type="entry name" value="EF_Hand_1_Ca_BS"/>
</dbReference>
<dbReference type="InterPro" id="IPR002048">
    <property type="entry name" value="EF_hand_dom"/>
</dbReference>
<dbReference type="InterPro" id="IPR039862">
    <property type="entry name" value="NECAB1/2/3"/>
</dbReference>
<dbReference type="PANTHER" id="PTHR12178">
    <property type="entry name" value="EF-HAND DOMAIN-CONTAINING PROTEIN"/>
    <property type="match status" value="1"/>
</dbReference>
<dbReference type="PANTHER" id="PTHR12178:SF3">
    <property type="entry name" value="N-TERMINAL EF-HAND CALCIUM-BINDING PROTEIN 3"/>
    <property type="match status" value="1"/>
</dbReference>
<dbReference type="Pfam" id="PF03992">
    <property type="entry name" value="ABM"/>
    <property type="match status" value="1"/>
</dbReference>
<dbReference type="Pfam" id="PF13202">
    <property type="entry name" value="EF-hand_5"/>
    <property type="match status" value="1"/>
</dbReference>
<dbReference type="SMART" id="SM00054">
    <property type="entry name" value="EFh"/>
    <property type="match status" value="1"/>
</dbReference>
<dbReference type="SUPFAM" id="SSF54909">
    <property type="entry name" value="Dimeric alpha+beta barrel"/>
    <property type="match status" value="1"/>
</dbReference>
<dbReference type="SUPFAM" id="SSF47473">
    <property type="entry name" value="EF-hand"/>
    <property type="match status" value="1"/>
</dbReference>
<dbReference type="PROSITE" id="PS51725">
    <property type="entry name" value="ABM"/>
    <property type="match status" value="1"/>
</dbReference>
<dbReference type="PROSITE" id="PS00018">
    <property type="entry name" value="EF_HAND_1"/>
    <property type="match status" value="1"/>
</dbReference>
<dbReference type="PROSITE" id="PS50222">
    <property type="entry name" value="EF_HAND_2"/>
    <property type="match status" value="1"/>
</dbReference>
<protein>
    <recommendedName>
        <fullName>N-terminal EF-hand calcium-binding protein 3</fullName>
    </recommendedName>
    <alternativeName>
        <fullName>Amyloid-beta A4 protein-binding family A member 2-binding protein</fullName>
    </alternativeName>
    <alternativeName>
        <fullName>X11L-binding protein 51</fullName>
        <shortName>mXB51</shortName>
    </alternativeName>
</protein>
<proteinExistence type="evidence at transcript level"/>
<gene>
    <name type="primary">Necab3</name>
    <name type="synonym">Apba2bp</name>
    <name type="synonym">Xb51</name>
</gene>
<comment type="function">
    <text evidence="1">Inhibits the interaction of APBA2 with amyloid-beta precursor protein (APP), and hence allows formation of amyloid-beta (By similarity). May enhance the activity of HIF1A and thus promote glycolysis under normoxic conditions; the function requires its ABM domain and may implicate the stabilization of the interaction between HIF1AN and APBA3 (By similarity).</text>
</comment>
<comment type="subunit">
    <text evidence="1">Interacts with the N-terminal domain of APBA2. Interacts with NEK2 (By similarity). Interacts with APBA3; APBA3 seems to mediate the interaction between NECAB3 and HIF1AN (By similarity).</text>
</comment>
<comment type="subcellular location">
    <subcellularLocation>
        <location evidence="1">Golgi apparatus</location>
    </subcellularLocation>
</comment>
<comment type="alternative products">
    <event type="alternative splicing"/>
    <isoform>
        <id>Q9D6J4-1</id>
        <name>1</name>
        <sequence type="displayed"/>
    </isoform>
    <isoform>
        <id>Q9D6J4-2</id>
        <name>2</name>
        <sequence type="described" ref="VSP_000740"/>
    </isoform>
</comment>
<comment type="tissue specificity">
    <text evidence="4">Widely expressed, with highest levels in the brain.</text>
</comment>
<comment type="PTM">
    <text evidence="1">Phosphorylated by NEK2.</text>
</comment>
<comment type="sequence caution" evidence="6">
    <conflict type="erroneous initiation">
        <sequence resource="EMBL-CDS" id="AAI26875"/>
    </conflict>
    <text>Truncated N-terminus.</text>
</comment>
<comment type="sequence caution" evidence="6">
    <conflict type="erroneous initiation">
        <sequence resource="EMBL-CDS" id="AAI26876"/>
    </conflict>
    <text>Truncated N-terminus.</text>
</comment>
<comment type="sequence caution" evidence="6">
    <conflict type="erroneous initiation">
        <sequence resource="EMBL-CDS" id="BAB16414"/>
    </conflict>
    <text>Truncated N-terminus.</text>
</comment>
<organism>
    <name type="scientific">Mus musculus</name>
    <name type="common">Mouse</name>
    <dbReference type="NCBI Taxonomy" id="10090"/>
    <lineage>
        <taxon>Eukaryota</taxon>
        <taxon>Metazoa</taxon>
        <taxon>Chordata</taxon>
        <taxon>Craniata</taxon>
        <taxon>Vertebrata</taxon>
        <taxon>Euteleostomi</taxon>
        <taxon>Mammalia</taxon>
        <taxon>Eutheria</taxon>
        <taxon>Euarchontoglires</taxon>
        <taxon>Glires</taxon>
        <taxon>Rodentia</taxon>
        <taxon>Myomorpha</taxon>
        <taxon>Muroidea</taxon>
        <taxon>Muridae</taxon>
        <taxon>Murinae</taxon>
        <taxon>Mus</taxon>
        <taxon>Mus</taxon>
    </lineage>
</organism>
<sequence>MACAGLLTVCLLGPPAPQQPRHSAPAAGHALFQDVFRRADKNDDGKLSFEEFQNYFADGVLSSAELRELFSGIDDHLTDNLETEKLCDYFSTHLGVYRPVLAALESLNRAVLTAMDTTKLEYEQASKVDQFVTRFLLRETVNQLQALQTSLEGASDTLEAQAHGQRLDEETIKAQSRPCGSRRAGRRALRSISWSPSWSPGSSDTGRSSEAEQQWRLQVNRLQELIDQLECKAPRLEPTHEEDLTKGFDSHILVAQRQVQVAEDALQDFHRALCCYMNFTGAQSHCLHVSAQKMLDNAAFTLYEFWQDEASWRRHQQSPCSKAFQRTLIDHLQAPDTLTTVFFPASWWIMNNN</sequence>
<name>NECA3_MOUSE</name>
<evidence type="ECO:0000250" key="1">
    <source>
        <dbReference type="UniProtKB" id="Q96P71"/>
    </source>
</evidence>
<evidence type="ECO:0000255" key="2">
    <source>
        <dbReference type="PROSITE-ProRule" id="PRU00448"/>
    </source>
</evidence>
<evidence type="ECO:0000256" key="3">
    <source>
        <dbReference type="SAM" id="MobiDB-lite"/>
    </source>
</evidence>
<evidence type="ECO:0000269" key="4">
    <source>
    </source>
</evidence>
<evidence type="ECO:0000303" key="5">
    <source>
    </source>
</evidence>
<evidence type="ECO:0000305" key="6"/>
<keyword id="KW-0025">Alternative splicing</keyword>
<keyword id="KW-0106">Calcium</keyword>
<keyword id="KW-0333">Golgi apparatus</keyword>
<keyword id="KW-0479">Metal-binding</keyword>
<keyword id="KW-0597">Phosphoprotein</keyword>
<keyword id="KW-1185">Reference proteome</keyword>
<reference key="1">
    <citation type="journal article" date="2005" name="Science">
        <title>The transcriptional landscape of the mammalian genome.</title>
        <authorList>
            <person name="Carninci P."/>
            <person name="Kasukawa T."/>
            <person name="Katayama S."/>
            <person name="Gough J."/>
            <person name="Frith M.C."/>
            <person name="Maeda N."/>
            <person name="Oyama R."/>
            <person name="Ravasi T."/>
            <person name="Lenhard B."/>
            <person name="Wells C."/>
            <person name="Kodzius R."/>
            <person name="Shimokawa K."/>
            <person name="Bajic V.B."/>
            <person name="Brenner S.E."/>
            <person name="Batalov S."/>
            <person name="Forrest A.R."/>
            <person name="Zavolan M."/>
            <person name="Davis M.J."/>
            <person name="Wilming L.G."/>
            <person name="Aidinis V."/>
            <person name="Allen J.E."/>
            <person name="Ambesi-Impiombato A."/>
            <person name="Apweiler R."/>
            <person name="Aturaliya R.N."/>
            <person name="Bailey T.L."/>
            <person name="Bansal M."/>
            <person name="Baxter L."/>
            <person name="Beisel K.W."/>
            <person name="Bersano T."/>
            <person name="Bono H."/>
            <person name="Chalk A.M."/>
            <person name="Chiu K.P."/>
            <person name="Choudhary V."/>
            <person name="Christoffels A."/>
            <person name="Clutterbuck D.R."/>
            <person name="Crowe M.L."/>
            <person name="Dalla E."/>
            <person name="Dalrymple B.P."/>
            <person name="de Bono B."/>
            <person name="Della Gatta G."/>
            <person name="di Bernardo D."/>
            <person name="Down T."/>
            <person name="Engstrom P."/>
            <person name="Fagiolini M."/>
            <person name="Faulkner G."/>
            <person name="Fletcher C.F."/>
            <person name="Fukushima T."/>
            <person name="Furuno M."/>
            <person name="Futaki S."/>
            <person name="Gariboldi M."/>
            <person name="Georgii-Hemming P."/>
            <person name="Gingeras T.R."/>
            <person name="Gojobori T."/>
            <person name="Green R.E."/>
            <person name="Gustincich S."/>
            <person name="Harbers M."/>
            <person name="Hayashi Y."/>
            <person name="Hensch T.K."/>
            <person name="Hirokawa N."/>
            <person name="Hill D."/>
            <person name="Huminiecki L."/>
            <person name="Iacono M."/>
            <person name="Ikeo K."/>
            <person name="Iwama A."/>
            <person name="Ishikawa T."/>
            <person name="Jakt M."/>
            <person name="Kanapin A."/>
            <person name="Katoh M."/>
            <person name="Kawasawa Y."/>
            <person name="Kelso J."/>
            <person name="Kitamura H."/>
            <person name="Kitano H."/>
            <person name="Kollias G."/>
            <person name="Krishnan S.P."/>
            <person name="Kruger A."/>
            <person name="Kummerfeld S.K."/>
            <person name="Kurochkin I.V."/>
            <person name="Lareau L.F."/>
            <person name="Lazarevic D."/>
            <person name="Lipovich L."/>
            <person name="Liu J."/>
            <person name="Liuni S."/>
            <person name="McWilliam S."/>
            <person name="Madan Babu M."/>
            <person name="Madera M."/>
            <person name="Marchionni L."/>
            <person name="Matsuda H."/>
            <person name="Matsuzawa S."/>
            <person name="Miki H."/>
            <person name="Mignone F."/>
            <person name="Miyake S."/>
            <person name="Morris K."/>
            <person name="Mottagui-Tabar S."/>
            <person name="Mulder N."/>
            <person name="Nakano N."/>
            <person name="Nakauchi H."/>
            <person name="Ng P."/>
            <person name="Nilsson R."/>
            <person name="Nishiguchi S."/>
            <person name="Nishikawa S."/>
            <person name="Nori F."/>
            <person name="Ohara O."/>
            <person name="Okazaki Y."/>
            <person name="Orlando V."/>
            <person name="Pang K.C."/>
            <person name="Pavan W.J."/>
            <person name="Pavesi G."/>
            <person name="Pesole G."/>
            <person name="Petrovsky N."/>
            <person name="Piazza S."/>
            <person name="Reed J."/>
            <person name="Reid J.F."/>
            <person name="Ring B.Z."/>
            <person name="Ringwald M."/>
            <person name="Rost B."/>
            <person name="Ruan Y."/>
            <person name="Salzberg S.L."/>
            <person name="Sandelin A."/>
            <person name="Schneider C."/>
            <person name="Schoenbach C."/>
            <person name="Sekiguchi K."/>
            <person name="Semple C.A."/>
            <person name="Seno S."/>
            <person name="Sessa L."/>
            <person name="Sheng Y."/>
            <person name="Shibata Y."/>
            <person name="Shimada H."/>
            <person name="Shimada K."/>
            <person name="Silva D."/>
            <person name="Sinclair B."/>
            <person name="Sperling S."/>
            <person name="Stupka E."/>
            <person name="Sugiura K."/>
            <person name="Sultana R."/>
            <person name="Takenaka Y."/>
            <person name="Taki K."/>
            <person name="Tammoja K."/>
            <person name="Tan S.L."/>
            <person name="Tang S."/>
            <person name="Taylor M.S."/>
            <person name="Tegner J."/>
            <person name="Teichmann S.A."/>
            <person name="Ueda H.R."/>
            <person name="van Nimwegen E."/>
            <person name="Verardo R."/>
            <person name="Wei C.L."/>
            <person name="Yagi K."/>
            <person name="Yamanishi H."/>
            <person name="Zabarovsky E."/>
            <person name="Zhu S."/>
            <person name="Zimmer A."/>
            <person name="Hide W."/>
            <person name="Bult C."/>
            <person name="Grimmond S.M."/>
            <person name="Teasdale R.D."/>
            <person name="Liu E.T."/>
            <person name="Brusic V."/>
            <person name="Quackenbush J."/>
            <person name="Wahlestedt C."/>
            <person name="Mattick J.S."/>
            <person name="Hume D.A."/>
            <person name="Kai C."/>
            <person name="Sasaki D."/>
            <person name="Tomaru Y."/>
            <person name="Fukuda S."/>
            <person name="Kanamori-Katayama M."/>
            <person name="Suzuki M."/>
            <person name="Aoki J."/>
            <person name="Arakawa T."/>
            <person name="Iida J."/>
            <person name="Imamura K."/>
            <person name="Itoh M."/>
            <person name="Kato T."/>
            <person name="Kawaji H."/>
            <person name="Kawagashira N."/>
            <person name="Kawashima T."/>
            <person name="Kojima M."/>
            <person name="Kondo S."/>
            <person name="Konno H."/>
            <person name="Nakano K."/>
            <person name="Ninomiya N."/>
            <person name="Nishio T."/>
            <person name="Okada M."/>
            <person name="Plessy C."/>
            <person name="Shibata K."/>
            <person name="Shiraki T."/>
            <person name="Suzuki S."/>
            <person name="Tagami M."/>
            <person name="Waki K."/>
            <person name="Watahiki A."/>
            <person name="Okamura-Oho Y."/>
            <person name="Suzuki H."/>
            <person name="Kawai J."/>
            <person name="Hayashizaki Y."/>
        </authorList>
    </citation>
    <scope>NUCLEOTIDE SEQUENCE [LARGE SCALE MRNA] (ISOFORMS 1 AND 2)</scope>
    <source>
        <strain>C57BL/6J</strain>
        <tissue>Hippocampus</tissue>
        <tissue>Inner ear</tissue>
        <tissue>Retina</tissue>
    </source>
</reference>
<reference key="2">
    <citation type="journal article" date="2009" name="PLoS Biol.">
        <title>Lineage-specific biology revealed by a finished genome assembly of the mouse.</title>
        <authorList>
            <person name="Church D.M."/>
            <person name="Goodstadt L."/>
            <person name="Hillier L.W."/>
            <person name="Zody M.C."/>
            <person name="Goldstein S."/>
            <person name="She X."/>
            <person name="Bult C.J."/>
            <person name="Agarwala R."/>
            <person name="Cherry J.L."/>
            <person name="DiCuccio M."/>
            <person name="Hlavina W."/>
            <person name="Kapustin Y."/>
            <person name="Meric P."/>
            <person name="Maglott D."/>
            <person name="Birtle Z."/>
            <person name="Marques A.C."/>
            <person name="Graves T."/>
            <person name="Zhou S."/>
            <person name="Teague B."/>
            <person name="Potamousis K."/>
            <person name="Churas C."/>
            <person name="Place M."/>
            <person name="Herschleb J."/>
            <person name="Runnheim R."/>
            <person name="Forrest D."/>
            <person name="Amos-Landgraf J."/>
            <person name="Schwartz D.C."/>
            <person name="Cheng Z."/>
            <person name="Lindblad-Toh K."/>
            <person name="Eichler E.E."/>
            <person name="Ponting C.P."/>
        </authorList>
    </citation>
    <scope>NUCLEOTIDE SEQUENCE [LARGE SCALE GENOMIC DNA]</scope>
    <source>
        <strain>C57BL/6J</strain>
    </source>
</reference>
<reference key="3">
    <citation type="submission" date="2005-07" db="EMBL/GenBank/DDBJ databases">
        <authorList>
            <person name="Mural R.J."/>
            <person name="Adams M.D."/>
            <person name="Myers E.W."/>
            <person name="Smith H.O."/>
            <person name="Venter J.C."/>
        </authorList>
    </citation>
    <scope>NUCLEOTIDE SEQUENCE [LARGE SCALE GENOMIC DNA]</scope>
</reference>
<reference key="4">
    <citation type="journal article" date="2000" name="J. Biol. Chem.">
        <title>Regulation of X11L-dependent amyloid precursor protein metabolism by XB51, a novel X11L-binding protein.</title>
        <authorList>
            <person name="Lee D.-S."/>
            <person name="Tomita S."/>
            <person name="Kirino Y."/>
            <person name="Suzuki T."/>
        </authorList>
    </citation>
    <scope>NUCLEOTIDE SEQUENCE [MRNA] OF 56-353 (ISOFORM 1)</scope>
    <source>
        <tissue>Brain</tissue>
    </source>
</reference>
<reference key="5">
    <citation type="journal article" date="2004" name="Genome Res.">
        <title>The status, quality, and expansion of the NIH full-length cDNA project: the Mammalian Gene Collection (MGC).</title>
        <authorList>
            <consortium name="The MGC Project Team"/>
        </authorList>
    </citation>
    <scope>NUCLEOTIDE SEQUENCE [LARGE SCALE MRNA] OF 59-353 (ISOFORM 1)</scope>
</reference>
<reference key="6">
    <citation type="journal article" date="2004" name="Exp. Cell Res.">
        <title>NIP1/XB51/NECAB3 is a potential substrate of Nek2, suggesting specific roles of Nek2 in Golgi.</title>
        <authorList>
            <person name="Yoo J.C."/>
            <person name="Chang J.R."/>
            <person name="Kim S.H."/>
            <person name="Jang S.K."/>
            <person name="Wolgemuth D.J."/>
            <person name="Kim K."/>
            <person name="Rhee K."/>
        </authorList>
    </citation>
    <scope>TISSUE SPECIFICITY</scope>
</reference>